<comment type="subcellular location">
    <subcellularLocation>
        <location evidence="1">Membrane</location>
        <topology evidence="1">Multi-pass membrane protein</topology>
    </subcellularLocation>
</comment>
<comment type="similarity">
    <text evidence="1">Belongs to the major facilitator superfamily. CAR1 family.</text>
</comment>
<name>YI45_SCHPO</name>
<proteinExistence type="inferred from homology"/>
<feature type="chain" id="PRO_0000372789" description="Uncharacterized transporter C1348.05">
    <location>
        <begin position="1"/>
        <end position="485"/>
    </location>
</feature>
<feature type="transmembrane region" description="Helical" evidence="1">
    <location>
        <begin position="79"/>
        <end position="99"/>
    </location>
</feature>
<feature type="transmembrane region" description="Helical" evidence="1">
    <location>
        <begin position="117"/>
        <end position="137"/>
    </location>
</feature>
<feature type="transmembrane region" description="Helical" evidence="1">
    <location>
        <begin position="139"/>
        <end position="159"/>
    </location>
</feature>
<feature type="transmembrane region" description="Helical" evidence="1">
    <location>
        <begin position="170"/>
        <end position="190"/>
    </location>
</feature>
<feature type="transmembrane region" description="Helical" evidence="1">
    <location>
        <begin position="199"/>
        <end position="219"/>
    </location>
</feature>
<feature type="transmembrane region" description="Helical" evidence="1">
    <location>
        <begin position="275"/>
        <end position="295"/>
    </location>
</feature>
<feature type="transmembrane region" description="Helical" evidence="1">
    <location>
        <begin position="313"/>
        <end position="333"/>
    </location>
</feature>
<feature type="transmembrane region" description="Helical" evidence="1">
    <location>
        <begin position="355"/>
        <end position="375"/>
    </location>
</feature>
<feature type="transmembrane region" description="Helical" evidence="1">
    <location>
        <begin position="380"/>
        <end position="400"/>
    </location>
</feature>
<feature type="transmembrane region" description="Helical" evidence="1">
    <location>
        <begin position="421"/>
        <end position="441"/>
    </location>
</feature>
<feature type="transmembrane region" description="Helical" evidence="1">
    <location>
        <begin position="448"/>
        <end position="468"/>
    </location>
</feature>
<accession>Q9P3V5</accession>
<keyword id="KW-0472">Membrane</keyword>
<keyword id="KW-1185">Reference proteome</keyword>
<keyword id="KW-0812">Transmembrane</keyword>
<keyword id="KW-1133">Transmembrane helix</keyword>
<keyword id="KW-0813">Transport</keyword>
<organism>
    <name type="scientific">Schizosaccharomyces pombe (strain 972 / ATCC 24843)</name>
    <name type="common">Fission yeast</name>
    <dbReference type="NCBI Taxonomy" id="284812"/>
    <lineage>
        <taxon>Eukaryota</taxon>
        <taxon>Fungi</taxon>
        <taxon>Dikarya</taxon>
        <taxon>Ascomycota</taxon>
        <taxon>Taphrinomycotina</taxon>
        <taxon>Schizosaccharomycetes</taxon>
        <taxon>Schizosaccharomycetales</taxon>
        <taxon>Schizosaccharomycetaceae</taxon>
        <taxon>Schizosaccharomyces</taxon>
    </lineage>
</organism>
<reference evidence="2" key="1">
    <citation type="journal article" date="2002" name="Nature">
        <title>The genome sequence of Schizosaccharomyces pombe.</title>
        <authorList>
            <person name="Wood V."/>
            <person name="Gwilliam R."/>
            <person name="Rajandream M.A."/>
            <person name="Lyne M.H."/>
            <person name="Lyne R."/>
            <person name="Stewart A."/>
            <person name="Sgouros J.G."/>
            <person name="Peat N."/>
            <person name="Hayles J."/>
            <person name="Baker S.G."/>
            <person name="Basham D."/>
            <person name="Bowman S."/>
            <person name="Brooks K."/>
            <person name="Brown D."/>
            <person name="Brown S."/>
            <person name="Chillingworth T."/>
            <person name="Churcher C.M."/>
            <person name="Collins M."/>
            <person name="Connor R."/>
            <person name="Cronin A."/>
            <person name="Davis P."/>
            <person name="Feltwell T."/>
            <person name="Fraser A."/>
            <person name="Gentles S."/>
            <person name="Goble A."/>
            <person name="Hamlin N."/>
            <person name="Harris D.E."/>
            <person name="Hidalgo J."/>
            <person name="Hodgson G."/>
            <person name="Holroyd S."/>
            <person name="Hornsby T."/>
            <person name="Howarth S."/>
            <person name="Huckle E.J."/>
            <person name="Hunt S."/>
            <person name="Jagels K."/>
            <person name="James K.D."/>
            <person name="Jones L."/>
            <person name="Jones M."/>
            <person name="Leather S."/>
            <person name="McDonald S."/>
            <person name="McLean J."/>
            <person name="Mooney P."/>
            <person name="Moule S."/>
            <person name="Mungall K.L."/>
            <person name="Murphy L.D."/>
            <person name="Niblett D."/>
            <person name="Odell C."/>
            <person name="Oliver K."/>
            <person name="O'Neil S."/>
            <person name="Pearson D."/>
            <person name="Quail M.A."/>
            <person name="Rabbinowitsch E."/>
            <person name="Rutherford K.M."/>
            <person name="Rutter S."/>
            <person name="Saunders D."/>
            <person name="Seeger K."/>
            <person name="Sharp S."/>
            <person name="Skelton J."/>
            <person name="Simmonds M.N."/>
            <person name="Squares R."/>
            <person name="Squares S."/>
            <person name="Stevens K."/>
            <person name="Taylor K."/>
            <person name="Taylor R.G."/>
            <person name="Tivey A."/>
            <person name="Walsh S.V."/>
            <person name="Warren T."/>
            <person name="Whitehead S."/>
            <person name="Woodward J.R."/>
            <person name="Volckaert G."/>
            <person name="Aert R."/>
            <person name="Robben J."/>
            <person name="Grymonprez B."/>
            <person name="Weltjens I."/>
            <person name="Vanstreels E."/>
            <person name="Rieger M."/>
            <person name="Schaefer M."/>
            <person name="Mueller-Auer S."/>
            <person name="Gabel C."/>
            <person name="Fuchs M."/>
            <person name="Duesterhoeft A."/>
            <person name="Fritzc C."/>
            <person name="Holzer E."/>
            <person name="Moestl D."/>
            <person name="Hilbert H."/>
            <person name="Borzym K."/>
            <person name="Langer I."/>
            <person name="Beck A."/>
            <person name="Lehrach H."/>
            <person name="Reinhardt R."/>
            <person name="Pohl T.M."/>
            <person name="Eger P."/>
            <person name="Zimmermann W."/>
            <person name="Wedler H."/>
            <person name="Wambutt R."/>
            <person name="Purnelle B."/>
            <person name="Goffeau A."/>
            <person name="Cadieu E."/>
            <person name="Dreano S."/>
            <person name="Gloux S."/>
            <person name="Lelaure V."/>
            <person name="Mottier S."/>
            <person name="Galibert F."/>
            <person name="Aves S.J."/>
            <person name="Xiang Z."/>
            <person name="Hunt C."/>
            <person name="Moore K."/>
            <person name="Hurst S.M."/>
            <person name="Lucas M."/>
            <person name="Rochet M."/>
            <person name="Gaillardin C."/>
            <person name="Tallada V.A."/>
            <person name="Garzon A."/>
            <person name="Thode G."/>
            <person name="Daga R.R."/>
            <person name="Cruzado L."/>
            <person name="Jimenez J."/>
            <person name="Sanchez M."/>
            <person name="del Rey F."/>
            <person name="Benito J."/>
            <person name="Dominguez A."/>
            <person name="Revuelta J.L."/>
            <person name="Moreno S."/>
            <person name="Armstrong J."/>
            <person name="Forsburg S.L."/>
            <person name="Cerutti L."/>
            <person name="Lowe T."/>
            <person name="McCombie W.R."/>
            <person name="Paulsen I."/>
            <person name="Potashkin J."/>
            <person name="Shpakovski G.V."/>
            <person name="Ussery D."/>
            <person name="Barrell B.G."/>
            <person name="Nurse P."/>
        </authorList>
    </citation>
    <scope>NUCLEOTIDE SEQUENCE [LARGE SCALE GENOMIC DNA]</scope>
    <source>
        <strain>972 / ATCC 24843</strain>
    </source>
</reference>
<dbReference type="EMBL" id="CU329671">
    <property type="protein sequence ID" value="CAB94272.1"/>
    <property type="molecule type" value="Genomic_DNA"/>
</dbReference>
<dbReference type="RefSeq" id="NP_592767.1">
    <property type="nucleotide sequence ID" value="NM_001020930.2"/>
</dbReference>
<dbReference type="SMR" id="Q9P3V5"/>
<dbReference type="BioGRID" id="279376">
    <property type="interactions" value="1"/>
</dbReference>
<dbReference type="FunCoup" id="Q9P3V5">
    <property type="interactions" value="7"/>
</dbReference>
<dbReference type="STRING" id="284812.Q9P3V5"/>
<dbReference type="PaxDb" id="4896-SPBC1348.05.1"/>
<dbReference type="EnsemblFungi" id="SPBC1348.05.1">
    <property type="protein sequence ID" value="SPBC1348.05.1:pep"/>
    <property type="gene ID" value="SPBC1348.05"/>
</dbReference>
<dbReference type="KEGG" id="spo:2542935"/>
<dbReference type="PomBase" id="SPBC1348.05"/>
<dbReference type="VEuPathDB" id="FungiDB:SPBC1348.05"/>
<dbReference type="eggNOG" id="KOG0255">
    <property type="taxonomic scope" value="Eukaryota"/>
</dbReference>
<dbReference type="HOGENOM" id="CLU_008455_1_1_1"/>
<dbReference type="InParanoid" id="Q9P3V5"/>
<dbReference type="OMA" id="PICTFMS"/>
<dbReference type="PhylomeDB" id="Q9P3V5"/>
<dbReference type="PRO" id="PR:Q9P3V5"/>
<dbReference type="Proteomes" id="UP000002485">
    <property type="component" value="Chromosome II"/>
</dbReference>
<dbReference type="GO" id="GO:0016020">
    <property type="term" value="C:membrane"/>
    <property type="evidence" value="ECO:0007669"/>
    <property type="project" value="UniProtKB-SubCell"/>
</dbReference>
<dbReference type="GO" id="GO:0022857">
    <property type="term" value="F:transmembrane transporter activity"/>
    <property type="evidence" value="ECO:0000318"/>
    <property type="project" value="GO_Central"/>
</dbReference>
<dbReference type="GO" id="GO:0055085">
    <property type="term" value="P:transmembrane transport"/>
    <property type="evidence" value="ECO:0000318"/>
    <property type="project" value="GO_Central"/>
</dbReference>
<dbReference type="CDD" id="cd17323">
    <property type="entry name" value="MFS_Tpo1_MDR_like"/>
    <property type="match status" value="1"/>
</dbReference>
<dbReference type="FunFam" id="1.20.1250.20:FF:000509">
    <property type="entry name" value="MFS general substrate transporter"/>
    <property type="match status" value="1"/>
</dbReference>
<dbReference type="Gene3D" id="1.20.1250.20">
    <property type="entry name" value="MFS general substrate transporter like domains"/>
    <property type="match status" value="1"/>
</dbReference>
<dbReference type="InterPro" id="IPR011701">
    <property type="entry name" value="MFS"/>
</dbReference>
<dbReference type="InterPro" id="IPR020846">
    <property type="entry name" value="MFS_dom"/>
</dbReference>
<dbReference type="InterPro" id="IPR036259">
    <property type="entry name" value="MFS_trans_sf"/>
</dbReference>
<dbReference type="PANTHER" id="PTHR23502">
    <property type="entry name" value="MAJOR FACILITATOR SUPERFAMILY"/>
    <property type="match status" value="1"/>
</dbReference>
<dbReference type="PANTHER" id="PTHR23502:SF189">
    <property type="entry name" value="MEMBRANE TRANSPORTER"/>
    <property type="match status" value="1"/>
</dbReference>
<dbReference type="Pfam" id="PF07690">
    <property type="entry name" value="MFS_1"/>
    <property type="match status" value="1"/>
</dbReference>
<dbReference type="SUPFAM" id="SSF103473">
    <property type="entry name" value="MFS general substrate transporter"/>
    <property type="match status" value="1"/>
</dbReference>
<dbReference type="PROSITE" id="PS50850">
    <property type="entry name" value="MFS"/>
    <property type="match status" value="1"/>
</dbReference>
<sequence length="485" mass="54121">MKEESILKKCDSSSIKHVPSTPLETNCPDKYNPKTWPIRLKVRNVIVISSMTFLNQYGDSVFAPSISNIAEQFHASRTLVTLGATLYTLGILFGNLIFAPLSEQFGRRPIYLIGYSVFALLQIPIALSVNLAMFLVFRFFSGLFGSVGLSNGSGSLADLFEKKDRGKYMVIYFTVLSIGPGIAPIISGFISQSSIGWQWEFWILLILSGFNLFWAFLLLKETYPPVLNRKKFEKYGEIGENEPVALRLTGKQLLIKLLILLSMKKPISILLSQPILICVACTIGSIYGMINLVLIAFSEVWKSSYDFSPGISGLMYISITLGLFSAVFIAMPINQKFYSYLVKRNGGEGEPEFRLPMGFIGITLFEIGILLFGWTARYKIFWFVPTIGSAIMGGGYIMTSNPLNMYVVDSYGIYSASASAGVKIFQLLFGAIFPLFAESLFRRLNYGWGCTLLAFILLACGCSLPILFKYGKQIRNLRPFDPSKY</sequence>
<gene>
    <name type="ORF">SPAC1348.05</name>
    <name type="ORF">SPBC1348.05</name>
</gene>
<evidence type="ECO:0000255" key="1"/>
<evidence type="ECO:0000312" key="2">
    <source>
        <dbReference type="EMBL" id="CAB94272.1"/>
    </source>
</evidence>
<protein>
    <recommendedName>
        <fullName>Uncharacterized transporter C1348.05</fullName>
    </recommendedName>
</protein>